<keyword id="KW-0539">Nucleus</keyword>
<keyword id="KW-1185">Reference proteome</keyword>
<name>BACC_DROME</name>
<sequence length="152" mass="15460">MSAATEQQNNGDVAVEKVAADDVSAVKDDLKAKAAAEDKAAAADAAGDAADNGTSKDGEDAADAAAAAPAKESVKGTKRPAEAKSAESKKAKKAAAADGDSDEEEALEEIIEGDSEIESDEYDIPYDGEEDDIECDDDDDDNDDGSGSDDQA</sequence>
<dbReference type="EMBL" id="AE014134">
    <property type="protein sequence ID" value="AAF51217.1"/>
    <property type="molecule type" value="Genomic_DNA"/>
</dbReference>
<dbReference type="EMBL" id="AE014134">
    <property type="protein sequence ID" value="AAN10413.1"/>
    <property type="molecule type" value="Genomic_DNA"/>
</dbReference>
<dbReference type="EMBL" id="AE014134">
    <property type="protein sequence ID" value="AFH03527.1"/>
    <property type="molecule type" value="Genomic_DNA"/>
</dbReference>
<dbReference type="EMBL" id="AE014134">
    <property type="protein sequence ID" value="AGB92497.1"/>
    <property type="molecule type" value="Genomic_DNA"/>
</dbReference>
<dbReference type="EMBL" id="AY071349">
    <property type="protein sequence ID" value="AAL48971.1"/>
    <property type="molecule type" value="mRNA"/>
</dbReference>
<dbReference type="EMBL" id="BT081984">
    <property type="protein sequence ID" value="ACO53099.1"/>
    <property type="molecule type" value="mRNA"/>
</dbReference>
<dbReference type="EMBL" id="KX531734">
    <property type="protein sequence ID" value="ANY27544.1"/>
    <property type="molecule type" value="mRNA"/>
</dbReference>
<dbReference type="RefSeq" id="NP_001245850.1">
    <property type="nucleotide sequence ID" value="NM_001258921.3"/>
</dbReference>
<dbReference type="RefSeq" id="NP_001259960.1">
    <property type="nucleotide sequence ID" value="NM_001273031.2"/>
</dbReference>
<dbReference type="RefSeq" id="NP_608706.1">
    <property type="nucleotide sequence ID" value="NM_134862.4"/>
</dbReference>
<dbReference type="RefSeq" id="NP_722833.1">
    <property type="nucleotide sequence ID" value="NM_164498.3"/>
</dbReference>
<dbReference type="FunCoup" id="Q9VQF7">
    <property type="interactions" value="333"/>
</dbReference>
<dbReference type="IntAct" id="Q9VQF7">
    <property type="interactions" value="89"/>
</dbReference>
<dbReference type="STRING" id="7227.FBpp0307124"/>
<dbReference type="PaxDb" id="7227-FBpp0297923"/>
<dbReference type="DNASU" id="33462"/>
<dbReference type="EnsemblMetazoa" id="FBtr0077713">
    <property type="protein sequence ID" value="FBpp0077397"/>
    <property type="gene ID" value="FBgn0031453"/>
</dbReference>
<dbReference type="EnsemblMetazoa" id="FBtr0077714">
    <property type="protein sequence ID" value="FBpp0077398"/>
    <property type="gene ID" value="FBgn0031453"/>
</dbReference>
<dbReference type="EnsemblMetazoa" id="FBtr0307080">
    <property type="protein sequence ID" value="FBpp0297923"/>
    <property type="gene ID" value="FBgn0031453"/>
</dbReference>
<dbReference type="EnsemblMetazoa" id="FBtr0335125">
    <property type="protein sequence ID" value="FBpp0307124"/>
    <property type="gene ID" value="FBgn0031453"/>
</dbReference>
<dbReference type="GeneID" id="33462"/>
<dbReference type="KEGG" id="dme:Dmel_CG9894"/>
<dbReference type="UCSC" id="CG9894-RA">
    <property type="organism name" value="d. melanogaster"/>
</dbReference>
<dbReference type="AGR" id="FB:FBgn0031453"/>
<dbReference type="CTD" id="33462"/>
<dbReference type="FlyBase" id="FBgn0031453">
    <property type="gene designation" value="Bacc"/>
</dbReference>
<dbReference type="VEuPathDB" id="VectorBase:FBgn0031453"/>
<dbReference type="eggNOG" id="ENOG502T742">
    <property type="taxonomic scope" value="Eukaryota"/>
</dbReference>
<dbReference type="HOGENOM" id="CLU_1733366_0_0_1"/>
<dbReference type="InParanoid" id="Q9VQF7"/>
<dbReference type="OMA" id="DCRNTTK"/>
<dbReference type="SignaLink" id="Q9VQF7"/>
<dbReference type="BioGRID-ORCS" id="33462">
    <property type="hits" value="0 hits in 1 CRISPR screen"/>
</dbReference>
<dbReference type="ChiTaRS" id="Bacc">
    <property type="organism name" value="fly"/>
</dbReference>
<dbReference type="GenomeRNAi" id="33462"/>
<dbReference type="PRO" id="PR:Q9VQF7"/>
<dbReference type="Proteomes" id="UP000000803">
    <property type="component" value="Chromosome 2L"/>
</dbReference>
<dbReference type="Bgee" id="FBgn0031453">
    <property type="expression patterns" value="Expressed in centrifugal neuron C3 (Drosophila) in brain and 300 other cell types or tissues"/>
</dbReference>
<dbReference type="GO" id="GO:0005654">
    <property type="term" value="C:nucleoplasm"/>
    <property type="evidence" value="ECO:0000314"/>
    <property type="project" value="FlyBase"/>
</dbReference>
<dbReference type="GO" id="GO:0005634">
    <property type="term" value="C:nucleus"/>
    <property type="evidence" value="ECO:0000314"/>
    <property type="project" value="FlyBase"/>
</dbReference>
<dbReference type="GO" id="GO:0048149">
    <property type="term" value="P:behavioral response to ethanol"/>
    <property type="evidence" value="ECO:0000315"/>
    <property type="project" value="FlyBase"/>
</dbReference>
<reference evidence="9" key="1">
    <citation type="journal article" date="2000" name="Science">
        <title>The genome sequence of Drosophila melanogaster.</title>
        <authorList>
            <person name="Adams M.D."/>
            <person name="Celniker S.E."/>
            <person name="Holt R.A."/>
            <person name="Evans C.A."/>
            <person name="Gocayne J.D."/>
            <person name="Amanatides P.G."/>
            <person name="Scherer S.E."/>
            <person name="Li P.W."/>
            <person name="Hoskins R.A."/>
            <person name="Galle R.F."/>
            <person name="George R.A."/>
            <person name="Lewis S.E."/>
            <person name="Richards S."/>
            <person name="Ashburner M."/>
            <person name="Henderson S.N."/>
            <person name="Sutton G.G."/>
            <person name="Wortman J.R."/>
            <person name="Yandell M.D."/>
            <person name="Zhang Q."/>
            <person name="Chen L.X."/>
            <person name="Brandon R.C."/>
            <person name="Rogers Y.-H.C."/>
            <person name="Blazej R.G."/>
            <person name="Champe M."/>
            <person name="Pfeiffer B.D."/>
            <person name="Wan K.H."/>
            <person name="Doyle C."/>
            <person name="Baxter E.G."/>
            <person name="Helt G."/>
            <person name="Nelson C.R."/>
            <person name="Miklos G.L.G."/>
            <person name="Abril J.F."/>
            <person name="Agbayani A."/>
            <person name="An H.-J."/>
            <person name="Andrews-Pfannkoch C."/>
            <person name="Baldwin D."/>
            <person name="Ballew R.M."/>
            <person name="Basu A."/>
            <person name="Baxendale J."/>
            <person name="Bayraktaroglu L."/>
            <person name="Beasley E.M."/>
            <person name="Beeson K.Y."/>
            <person name="Benos P.V."/>
            <person name="Berman B.P."/>
            <person name="Bhandari D."/>
            <person name="Bolshakov S."/>
            <person name="Borkova D."/>
            <person name="Botchan M.R."/>
            <person name="Bouck J."/>
            <person name="Brokstein P."/>
            <person name="Brottier P."/>
            <person name="Burtis K.C."/>
            <person name="Busam D.A."/>
            <person name="Butler H."/>
            <person name="Cadieu E."/>
            <person name="Center A."/>
            <person name="Chandra I."/>
            <person name="Cherry J.M."/>
            <person name="Cawley S."/>
            <person name="Dahlke C."/>
            <person name="Davenport L.B."/>
            <person name="Davies P."/>
            <person name="de Pablos B."/>
            <person name="Delcher A."/>
            <person name="Deng Z."/>
            <person name="Mays A.D."/>
            <person name="Dew I."/>
            <person name="Dietz S.M."/>
            <person name="Dodson K."/>
            <person name="Doup L.E."/>
            <person name="Downes M."/>
            <person name="Dugan-Rocha S."/>
            <person name="Dunkov B.C."/>
            <person name="Dunn P."/>
            <person name="Durbin K.J."/>
            <person name="Evangelista C.C."/>
            <person name="Ferraz C."/>
            <person name="Ferriera S."/>
            <person name="Fleischmann W."/>
            <person name="Fosler C."/>
            <person name="Gabrielian A.E."/>
            <person name="Garg N.S."/>
            <person name="Gelbart W.M."/>
            <person name="Glasser K."/>
            <person name="Glodek A."/>
            <person name="Gong F."/>
            <person name="Gorrell J.H."/>
            <person name="Gu Z."/>
            <person name="Guan P."/>
            <person name="Harris M."/>
            <person name="Harris N.L."/>
            <person name="Harvey D.A."/>
            <person name="Heiman T.J."/>
            <person name="Hernandez J.R."/>
            <person name="Houck J."/>
            <person name="Hostin D."/>
            <person name="Houston K.A."/>
            <person name="Howland T.J."/>
            <person name="Wei M.-H."/>
            <person name="Ibegwam C."/>
            <person name="Jalali M."/>
            <person name="Kalush F."/>
            <person name="Karpen G.H."/>
            <person name="Ke Z."/>
            <person name="Kennison J.A."/>
            <person name="Ketchum K.A."/>
            <person name="Kimmel B.E."/>
            <person name="Kodira C.D."/>
            <person name="Kraft C.L."/>
            <person name="Kravitz S."/>
            <person name="Kulp D."/>
            <person name="Lai Z."/>
            <person name="Lasko P."/>
            <person name="Lei Y."/>
            <person name="Levitsky A.A."/>
            <person name="Li J.H."/>
            <person name="Li Z."/>
            <person name="Liang Y."/>
            <person name="Lin X."/>
            <person name="Liu X."/>
            <person name="Mattei B."/>
            <person name="McIntosh T.C."/>
            <person name="McLeod M.P."/>
            <person name="McPherson D."/>
            <person name="Merkulov G."/>
            <person name="Milshina N.V."/>
            <person name="Mobarry C."/>
            <person name="Morris J."/>
            <person name="Moshrefi A."/>
            <person name="Mount S.M."/>
            <person name="Moy M."/>
            <person name="Murphy B."/>
            <person name="Murphy L."/>
            <person name="Muzny D.M."/>
            <person name="Nelson D.L."/>
            <person name="Nelson D.R."/>
            <person name="Nelson K.A."/>
            <person name="Nixon K."/>
            <person name="Nusskern D.R."/>
            <person name="Pacleb J.M."/>
            <person name="Palazzolo M."/>
            <person name="Pittman G.S."/>
            <person name="Pan S."/>
            <person name="Pollard J."/>
            <person name="Puri V."/>
            <person name="Reese M.G."/>
            <person name="Reinert K."/>
            <person name="Remington K."/>
            <person name="Saunders R.D.C."/>
            <person name="Scheeler F."/>
            <person name="Shen H."/>
            <person name="Shue B.C."/>
            <person name="Siden-Kiamos I."/>
            <person name="Simpson M."/>
            <person name="Skupski M.P."/>
            <person name="Smith T.J."/>
            <person name="Spier E."/>
            <person name="Spradling A.C."/>
            <person name="Stapleton M."/>
            <person name="Strong R."/>
            <person name="Sun E."/>
            <person name="Svirskas R."/>
            <person name="Tector C."/>
            <person name="Turner R."/>
            <person name="Venter E."/>
            <person name="Wang A.H."/>
            <person name="Wang X."/>
            <person name="Wang Z.-Y."/>
            <person name="Wassarman D.A."/>
            <person name="Weinstock G.M."/>
            <person name="Weissenbach J."/>
            <person name="Williams S.M."/>
            <person name="Woodage T."/>
            <person name="Worley K.C."/>
            <person name="Wu D."/>
            <person name="Yang S."/>
            <person name="Yao Q.A."/>
            <person name="Ye J."/>
            <person name="Yeh R.-F."/>
            <person name="Zaveri J.S."/>
            <person name="Zhan M."/>
            <person name="Zhang G."/>
            <person name="Zhao Q."/>
            <person name="Zheng L."/>
            <person name="Zheng X.H."/>
            <person name="Zhong F.N."/>
            <person name="Zhong W."/>
            <person name="Zhou X."/>
            <person name="Zhu S.C."/>
            <person name="Zhu X."/>
            <person name="Smith H.O."/>
            <person name="Gibbs R.A."/>
            <person name="Myers E.W."/>
            <person name="Rubin G.M."/>
            <person name="Venter J.C."/>
        </authorList>
    </citation>
    <scope>NUCLEOTIDE SEQUENCE [LARGE SCALE GENOMIC DNA]</scope>
    <source>
        <strain evidence="9">Berkeley</strain>
    </source>
</reference>
<reference evidence="9" key="2">
    <citation type="journal article" date="2002" name="Genome Biol.">
        <title>Annotation of the Drosophila melanogaster euchromatic genome: a systematic review.</title>
        <authorList>
            <person name="Misra S."/>
            <person name="Crosby M.A."/>
            <person name="Mungall C.J."/>
            <person name="Matthews B.B."/>
            <person name="Campbell K.S."/>
            <person name="Hradecky P."/>
            <person name="Huang Y."/>
            <person name="Kaminker J.S."/>
            <person name="Millburn G.H."/>
            <person name="Prochnik S.E."/>
            <person name="Smith C.D."/>
            <person name="Tupy J.L."/>
            <person name="Whitfield E.J."/>
            <person name="Bayraktaroglu L."/>
            <person name="Berman B.P."/>
            <person name="Bettencourt B.R."/>
            <person name="Celniker S.E."/>
            <person name="de Grey A.D.N.J."/>
            <person name="Drysdale R.A."/>
            <person name="Harris N.L."/>
            <person name="Richter J."/>
            <person name="Russo S."/>
            <person name="Schroeder A.J."/>
            <person name="Shu S.Q."/>
            <person name="Stapleton M."/>
            <person name="Yamada C."/>
            <person name="Ashburner M."/>
            <person name="Gelbart W.M."/>
            <person name="Rubin G.M."/>
            <person name="Lewis S.E."/>
        </authorList>
    </citation>
    <scope>GENOME REANNOTATION</scope>
    <source>
        <strain evidence="9">Berkeley</strain>
    </source>
</reference>
<reference evidence="5" key="3">
    <citation type="submission" date="2001-12" db="EMBL/GenBank/DDBJ databases">
        <authorList>
            <person name="Stapleton M."/>
            <person name="Brokstein P."/>
            <person name="Hong L."/>
            <person name="Agbayani A."/>
            <person name="Carlson J."/>
            <person name="Champe M."/>
            <person name="Chavez C."/>
            <person name="Dorsett V."/>
            <person name="Dresnek D."/>
            <person name="Farfan D."/>
            <person name="Frise E."/>
            <person name="George R."/>
            <person name="Gonzalez M."/>
            <person name="Guarin H."/>
            <person name="Kronmiller B."/>
            <person name="Li P."/>
            <person name="Liao G."/>
            <person name="Miranda A."/>
            <person name="Mungall C.J."/>
            <person name="Nunoo J."/>
            <person name="Pacleb J."/>
            <person name="Paragas V."/>
            <person name="Park S."/>
            <person name="Patel S."/>
            <person name="Phouanenavong S."/>
            <person name="Wan K."/>
            <person name="Yu C."/>
            <person name="Lewis S.E."/>
            <person name="Rubin G.M."/>
            <person name="Celniker S."/>
        </authorList>
    </citation>
    <scope>NUCLEOTIDE SEQUENCE [LARGE SCALE MRNA]</scope>
    <source>
        <strain evidence="5">Berkeley</strain>
        <tissue evidence="5">Embryo</tissue>
    </source>
</reference>
<reference evidence="6" key="4">
    <citation type="submission" date="2009-04" db="EMBL/GenBank/DDBJ databases">
        <authorList>
            <person name="Carlson J."/>
            <person name="Booth B."/>
            <person name="Frise E."/>
            <person name="Sandler J."/>
            <person name="Wan K."/>
            <person name="Yu C."/>
            <person name="Celniker S."/>
        </authorList>
    </citation>
    <scope>NUCLEOTIDE SEQUENCE [LARGE SCALE MRNA]</scope>
    <source>
        <strain evidence="6">Berkeley</strain>
    </source>
</reference>
<reference key="5">
    <citation type="submission" date="2016-07" db="EMBL/GenBank/DDBJ databases">
        <authorList>
            <person name="Wan K."/>
            <person name="Booth B."/>
            <person name="Spirohn K."/>
            <person name="Hao T."/>
            <person name="Hu Y."/>
            <person name="Calderwood M."/>
            <person name="Hill D."/>
            <person name="Mohr S."/>
            <person name="Vidal M."/>
            <person name="Celniker S."/>
            <person name="Perrimon N."/>
        </authorList>
    </citation>
    <scope>NUCLEOTIDE SEQUENCE [LARGE SCALE MRNA]</scope>
    <source>
        <strain evidence="7">Berkeley</strain>
        <tissue evidence="7">Embryo</tissue>
    </source>
</reference>
<reference key="6">
    <citation type="journal article" date="2002" name="Mech. Dev.">
        <title>Identification of novel Drosophila neural precursor genes using a differential embryonic head cDNA screen.</title>
        <authorList>
            <person name="Brody T."/>
            <person name="Stivers C."/>
            <person name="Nagle J."/>
            <person name="Odenwald W.F."/>
        </authorList>
    </citation>
    <scope>DEVELOPMENTAL STAGE</scope>
</reference>
<reference key="7">
    <citation type="journal article" date="2013" name="Neuropharmacology">
        <title>Mutations in Bacchus reveal a tyramine-dependent nuclear regulator for acute ethanol sensitivity in Drosophila.</title>
        <authorList>
            <person name="Chen J."/>
            <person name="Wang Y."/>
            <person name="Zhang Y."/>
            <person name="Shen P."/>
        </authorList>
    </citation>
    <scope>FUNCTION</scope>
    <scope>SUBCELLULAR LOCATION</scope>
    <scope>TISSUE SPECIFICITY</scope>
    <scope>DISRUPTION PHENOTYPE</scope>
</reference>
<feature type="chain" id="PRO_0000438107" description="Bacchus">
    <location>
        <begin position="1"/>
        <end position="152"/>
    </location>
</feature>
<feature type="region of interest" description="Disordered" evidence="1">
    <location>
        <begin position="29"/>
        <end position="152"/>
    </location>
</feature>
<feature type="compositionally biased region" description="Basic and acidic residues" evidence="1">
    <location>
        <begin position="29"/>
        <end position="41"/>
    </location>
</feature>
<feature type="compositionally biased region" description="Low complexity" evidence="1">
    <location>
        <begin position="42"/>
        <end position="51"/>
    </location>
</feature>
<feature type="compositionally biased region" description="Basic and acidic residues" evidence="1">
    <location>
        <begin position="72"/>
        <end position="89"/>
    </location>
</feature>
<feature type="compositionally biased region" description="Acidic residues" evidence="1">
    <location>
        <begin position="99"/>
        <end position="152"/>
    </location>
</feature>
<organism evidence="9">
    <name type="scientific">Drosophila melanogaster</name>
    <name type="common">Fruit fly</name>
    <dbReference type="NCBI Taxonomy" id="7227"/>
    <lineage>
        <taxon>Eukaryota</taxon>
        <taxon>Metazoa</taxon>
        <taxon>Ecdysozoa</taxon>
        <taxon>Arthropoda</taxon>
        <taxon>Hexapoda</taxon>
        <taxon>Insecta</taxon>
        <taxon>Pterygota</taxon>
        <taxon>Neoptera</taxon>
        <taxon>Endopterygota</taxon>
        <taxon>Diptera</taxon>
        <taxon>Brachycera</taxon>
        <taxon>Muscomorpha</taxon>
        <taxon>Ephydroidea</taxon>
        <taxon>Drosophilidae</taxon>
        <taxon>Drosophila</taxon>
        <taxon>Sophophora</taxon>
    </lineage>
</organism>
<proteinExistence type="evidence at transcript level"/>
<evidence type="ECO:0000256" key="1">
    <source>
        <dbReference type="SAM" id="MobiDB-lite"/>
    </source>
</evidence>
<evidence type="ECO:0000269" key="2">
    <source>
    </source>
</evidence>
<evidence type="ECO:0000269" key="3">
    <source>
    </source>
</evidence>
<evidence type="ECO:0000303" key="4">
    <source>
    </source>
</evidence>
<evidence type="ECO:0000312" key="5">
    <source>
        <dbReference type="EMBL" id="AAL48971.1"/>
    </source>
</evidence>
<evidence type="ECO:0000312" key="6">
    <source>
        <dbReference type="EMBL" id="ACO53099.1"/>
    </source>
</evidence>
<evidence type="ECO:0000312" key="7">
    <source>
        <dbReference type="EMBL" id="ANY27544.1"/>
    </source>
</evidence>
<evidence type="ECO:0000312" key="8">
    <source>
        <dbReference type="FlyBase" id="FBgn0031453"/>
    </source>
</evidence>
<evidence type="ECO:0000312" key="9">
    <source>
        <dbReference type="Proteomes" id="UP000000803"/>
    </source>
</evidence>
<gene>
    <name evidence="8" type="primary">Bacc</name>
    <name evidence="8" type="ORF">CG9894</name>
</gene>
<accession>Q9VQF7</accession>
<protein>
    <recommendedName>
        <fullName evidence="4">Bacchus</fullName>
    </recommendedName>
</protein>
<comment type="function">
    <text evidence="3">Negatively regulates tyramine beta-hydroxylase tbh and thus the conversion of tyramine (TA) to octopamine (OA). In tyrosine decarboxylase 2 (Tdc2) neurons, acts in an amine-mediated signaling pathway to negatively regulate acute ethanol sensitivity probably via tbh-mediated depletion of TA.</text>
</comment>
<comment type="subcellular location">
    <subcellularLocation>
        <location evidence="3">Nucleus</location>
    </subcellularLocation>
</comment>
<comment type="tissue specificity">
    <text evidence="3">Expressed in the brain.</text>
</comment>
<comment type="developmental stage">
    <text evidence="2">In embryos, first expressed in the ganglion mother cells (GMCs) of the central nervous system (CNS) and the sensory organ precursors (SOPs) of the peripheral nervous system (PNS). At stage 14, it is no longer detected in the lateral PNS. Expressed in the antenno-maxillary complex from stage 14 and throughout stage 15.</text>
</comment>
<comment type="disruption phenotype">
    <text evidence="3">RNAi-mediated knockdown in neurons causes a reduction in sensitivity to ethanol intoxication.</text>
</comment>